<evidence type="ECO:0000255" key="1">
    <source>
        <dbReference type="HAMAP-Rule" id="MF_00049"/>
    </source>
</evidence>
<dbReference type="EC" id="6.1.1.4" evidence="1"/>
<dbReference type="EMBL" id="CP000767">
    <property type="protein sequence ID" value="EAU00405.1"/>
    <property type="molecule type" value="Genomic_DNA"/>
</dbReference>
<dbReference type="RefSeq" id="WP_011992459.1">
    <property type="nucleotide sequence ID" value="NC_009715.2"/>
</dbReference>
<dbReference type="SMR" id="A7GZ81"/>
<dbReference type="STRING" id="360105.CCV52592_0710"/>
<dbReference type="KEGG" id="ccv:CCV52592_0710"/>
<dbReference type="HOGENOM" id="CLU_004427_0_0_7"/>
<dbReference type="OrthoDB" id="9810365at2"/>
<dbReference type="Proteomes" id="UP000006380">
    <property type="component" value="Chromosome"/>
</dbReference>
<dbReference type="GO" id="GO:0005829">
    <property type="term" value="C:cytosol"/>
    <property type="evidence" value="ECO:0007669"/>
    <property type="project" value="TreeGrafter"/>
</dbReference>
<dbReference type="GO" id="GO:0002161">
    <property type="term" value="F:aminoacyl-tRNA deacylase activity"/>
    <property type="evidence" value="ECO:0007669"/>
    <property type="project" value="InterPro"/>
</dbReference>
<dbReference type="GO" id="GO:0005524">
    <property type="term" value="F:ATP binding"/>
    <property type="evidence" value="ECO:0007669"/>
    <property type="project" value="UniProtKB-UniRule"/>
</dbReference>
<dbReference type="GO" id="GO:0004823">
    <property type="term" value="F:leucine-tRNA ligase activity"/>
    <property type="evidence" value="ECO:0007669"/>
    <property type="project" value="UniProtKB-UniRule"/>
</dbReference>
<dbReference type="GO" id="GO:0006429">
    <property type="term" value="P:leucyl-tRNA aminoacylation"/>
    <property type="evidence" value="ECO:0007669"/>
    <property type="project" value="UniProtKB-UniRule"/>
</dbReference>
<dbReference type="CDD" id="cd07958">
    <property type="entry name" value="Anticodon_Ia_Leu_BEm"/>
    <property type="match status" value="1"/>
</dbReference>
<dbReference type="FunFam" id="1.10.730.10:FF:000002">
    <property type="entry name" value="Leucine--tRNA ligase"/>
    <property type="match status" value="1"/>
</dbReference>
<dbReference type="FunFam" id="3.40.50.620:FF:000003">
    <property type="entry name" value="Leucine--tRNA ligase"/>
    <property type="match status" value="1"/>
</dbReference>
<dbReference type="FunFam" id="3.40.50.620:FF:000056">
    <property type="entry name" value="Leucine--tRNA ligase"/>
    <property type="match status" value="1"/>
</dbReference>
<dbReference type="Gene3D" id="3.10.20.590">
    <property type="match status" value="1"/>
</dbReference>
<dbReference type="Gene3D" id="3.40.50.620">
    <property type="entry name" value="HUPs"/>
    <property type="match status" value="2"/>
</dbReference>
<dbReference type="Gene3D" id="1.10.730.10">
    <property type="entry name" value="Isoleucyl-tRNA Synthetase, Domain 1"/>
    <property type="match status" value="1"/>
</dbReference>
<dbReference type="HAMAP" id="MF_00049_B">
    <property type="entry name" value="Leu_tRNA_synth_B"/>
    <property type="match status" value="1"/>
</dbReference>
<dbReference type="InterPro" id="IPR001412">
    <property type="entry name" value="aa-tRNA-synth_I_CS"/>
</dbReference>
<dbReference type="InterPro" id="IPR002302">
    <property type="entry name" value="Leu-tRNA-ligase"/>
</dbReference>
<dbReference type="InterPro" id="IPR025709">
    <property type="entry name" value="Leu_tRNA-synth_edit"/>
</dbReference>
<dbReference type="InterPro" id="IPR013155">
    <property type="entry name" value="M/V/L/I-tRNA-synth_anticd-bd"/>
</dbReference>
<dbReference type="InterPro" id="IPR015413">
    <property type="entry name" value="Methionyl/Leucyl_tRNA_Synth"/>
</dbReference>
<dbReference type="InterPro" id="IPR014729">
    <property type="entry name" value="Rossmann-like_a/b/a_fold"/>
</dbReference>
<dbReference type="InterPro" id="IPR009080">
    <property type="entry name" value="tRNAsynth_Ia_anticodon-bd"/>
</dbReference>
<dbReference type="InterPro" id="IPR009008">
    <property type="entry name" value="Val/Leu/Ile-tRNA-synth_edit"/>
</dbReference>
<dbReference type="NCBIfam" id="TIGR00396">
    <property type="entry name" value="leuS_bact"/>
    <property type="match status" value="1"/>
</dbReference>
<dbReference type="PANTHER" id="PTHR43740:SF2">
    <property type="entry name" value="LEUCINE--TRNA LIGASE, MITOCHONDRIAL"/>
    <property type="match status" value="1"/>
</dbReference>
<dbReference type="PANTHER" id="PTHR43740">
    <property type="entry name" value="LEUCYL-TRNA SYNTHETASE"/>
    <property type="match status" value="1"/>
</dbReference>
<dbReference type="Pfam" id="PF08264">
    <property type="entry name" value="Anticodon_1"/>
    <property type="match status" value="1"/>
</dbReference>
<dbReference type="Pfam" id="PF13603">
    <property type="entry name" value="tRNA-synt_1_2"/>
    <property type="match status" value="1"/>
</dbReference>
<dbReference type="Pfam" id="PF09334">
    <property type="entry name" value="tRNA-synt_1g"/>
    <property type="match status" value="2"/>
</dbReference>
<dbReference type="PRINTS" id="PR00985">
    <property type="entry name" value="TRNASYNTHLEU"/>
</dbReference>
<dbReference type="SUPFAM" id="SSF47323">
    <property type="entry name" value="Anticodon-binding domain of a subclass of class I aminoacyl-tRNA synthetases"/>
    <property type="match status" value="1"/>
</dbReference>
<dbReference type="SUPFAM" id="SSF52374">
    <property type="entry name" value="Nucleotidylyl transferase"/>
    <property type="match status" value="1"/>
</dbReference>
<dbReference type="SUPFAM" id="SSF50677">
    <property type="entry name" value="ValRS/IleRS/LeuRS editing domain"/>
    <property type="match status" value="1"/>
</dbReference>
<dbReference type="PROSITE" id="PS00178">
    <property type="entry name" value="AA_TRNA_LIGASE_I"/>
    <property type="match status" value="1"/>
</dbReference>
<organism>
    <name type="scientific">Campylobacter curvus (strain 525.92)</name>
    <dbReference type="NCBI Taxonomy" id="360105"/>
    <lineage>
        <taxon>Bacteria</taxon>
        <taxon>Pseudomonadati</taxon>
        <taxon>Campylobacterota</taxon>
        <taxon>Epsilonproteobacteria</taxon>
        <taxon>Campylobacterales</taxon>
        <taxon>Campylobacteraceae</taxon>
        <taxon>Campylobacter</taxon>
    </lineage>
</organism>
<gene>
    <name evidence="1" type="primary">leuS</name>
    <name type="ordered locus">Ccur92_12190</name>
    <name type="ORF">CCV52592_0710</name>
</gene>
<accession>A7GZ81</accession>
<name>SYL_CAMC5</name>
<keyword id="KW-0030">Aminoacyl-tRNA synthetase</keyword>
<keyword id="KW-0067">ATP-binding</keyword>
<keyword id="KW-0963">Cytoplasm</keyword>
<keyword id="KW-0436">Ligase</keyword>
<keyword id="KW-0547">Nucleotide-binding</keyword>
<keyword id="KW-0648">Protein biosynthesis</keyword>
<keyword id="KW-1185">Reference proteome</keyword>
<feature type="chain" id="PRO_0000334739" description="Leucine--tRNA ligase">
    <location>
        <begin position="1"/>
        <end position="821"/>
    </location>
</feature>
<feature type="short sequence motif" description="'HIGH' region">
    <location>
        <begin position="44"/>
        <end position="54"/>
    </location>
</feature>
<feature type="short sequence motif" description="'KMSKS' region">
    <location>
        <begin position="589"/>
        <end position="593"/>
    </location>
</feature>
<feature type="binding site" evidence="1">
    <location>
        <position position="592"/>
    </location>
    <ligand>
        <name>ATP</name>
        <dbReference type="ChEBI" id="CHEBI:30616"/>
    </ligand>
</feature>
<protein>
    <recommendedName>
        <fullName evidence="1">Leucine--tRNA ligase</fullName>
        <ecNumber evidence="1">6.1.1.4</ecNumber>
    </recommendedName>
    <alternativeName>
        <fullName evidence="1">Leucyl-tRNA synthetase</fullName>
        <shortName evidence="1">LeuRS</shortName>
    </alternativeName>
</protein>
<proteinExistence type="inferred from homology"/>
<sequence>MAQNSKYEAAKIEKKWQEIWHKNGEFEPKDDYTLPKKYILSMFPYPSGRIHMGHVRNYSIGDALARYYRKNCFNVLHPIGFDSFGMPAENAAIKHKIHPKKWTYENIDYMKKELSSLGFSFSDRRMLATSDPLYTKWEQSFFIKMFEKGLVYRKSAIVNWCEHDQTVLANEQVEDGCCWRCGNEVVQREFPGYYFKITQYAEELLNDLKTLEGKWPNQVIAMQENWIGKSSGLEFKFYLDDASSRALGGKFDGFEVFTTRPDTIYGVSYVALAPEHKVVRALLSSEILDDTKKAKIKSILNQSPRERQASDKDGVFLDIYMLHPLTNEPVPVWVANFILADYGSGAIMAVPAHDQRDYEFASKFGLPIKQVVMPKEGKFDTSKANAEYGISINSPLINGLETKQAKQAIIEKFEKDGLGKRITNYKLRDWGISRQRYWGAPIPIVHCPNCGVVPENEQNLPIALPDDVVITGEGNPLDKHPTWKYTKCPKCGHDAVRETDTMDTFVESSWYFARFASDEKTWQQTAFDKKSVDYWMSVDQYIGGIEHAILHLLYARFFQKVLRDLGYLRDDEPFSNLLTQGMVLKDGKKMSKSKGNVVDPDDIINRYGADTARLFILFAAPPQKELEWNDSAVEGAYRFLNRLWDKAKTIKKSEILPAIEHANLNKDEKYARMKVYEALKKSNEVFNETFAFNTLIAACMEALNALNAQDNDDVNTEGFFIILNLLEPIVPHIANELSEELFRRKNFTKLEILEEVFVKDTINLAVTVNGKKRAEFEISADASEADVLQTAKASVAKWIEGKEIIKEIYIKGKLVNLVVKG</sequence>
<comment type="catalytic activity">
    <reaction evidence="1">
        <text>tRNA(Leu) + L-leucine + ATP = L-leucyl-tRNA(Leu) + AMP + diphosphate</text>
        <dbReference type="Rhea" id="RHEA:11688"/>
        <dbReference type="Rhea" id="RHEA-COMP:9613"/>
        <dbReference type="Rhea" id="RHEA-COMP:9622"/>
        <dbReference type="ChEBI" id="CHEBI:30616"/>
        <dbReference type="ChEBI" id="CHEBI:33019"/>
        <dbReference type="ChEBI" id="CHEBI:57427"/>
        <dbReference type="ChEBI" id="CHEBI:78442"/>
        <dbReference type="ChEBI" id="CHEBI:78494"/>
        <dbReference type="ChEBI" id="CHEBI:456215"/>
        <dbReference type="EC" id="6.1.1.4"/>
    </reaction>
</comment>
<comment type="subcellular location">
    <subcellularLocation>
        <location evidence="1">Cytoplasm</location>
    </subcellularLocation>
</comment>
<comment type="similarity">
    <text evidence="1">Belongs to the class-I aminoacyl-tRNA synthetase family.</text>
</comment>
<reference key="1">
    <citation type="submission" date="2007-07" db="EMBL/GenBank/DDBJ databases">
        <title>Genome sequence of Campylobacter curvus 525.92 isolated from human feces.</title>
        <authorList>
            <person name="Fouts D.E."/>
            <person name="Mongodin E.F."/>
            <person name="Puiu D."/>
            <person name="Sebastian Y."/>
            <person name="Miller W.G."/>
            <person name="Mandrell R.E."/>
            <person name="Lastovica A.J."/>
            <person name="Nelson K.E."/>
        </authorList>
    </citation>
    <scope>NUCLEOTIDE SEQUENCE [LARGE SCALE GENOMIC DNA]</scope>
    <source>
        <strain>525.92</strain>
    </source>
</reference>